<proteinExistence type="inferred from homology"/>
<dbReference type="EMBL" id="CP000781">
    <property type="protein sequence ID" value="ABS67426.1"/>
    <property type="molecule type" value="Genomic_DNA"/>
</dbReference>
<dbReference type="SMR" id="A7IHD3"/>
<dbReference type="STRING" id="78245.Xaut_2182"/>
<dbReference type="KEGG" id="xau:Xaut_2182"/>
<dbReference type="eggNOG" id="COG0375">
    <property type="taxonomic scope" value="Bacteria"/>
</dbReference>
<dbReference type="HOGENOM" id="CLU_126929_0_0_5"/>
<dbReference type="OrthoDB" id="288014at2"/>
<dbReference type="PhylomeDB" id="A7IHD3"/>
<dbReference type="Proteomes" id="UP000002417">
    <property type="component" value="Chromosome"/>
</dbReference>
<dbReference type="GO" id="GO:0016151">
    <property type="term" value="F:nickel cation binding"/>
    <property type="evidence" value="ECO:0007669"/>
    <property type="project" value="UniProtKB-UniRule"/>
</dbReference>
<dbReference type="GO" id="GO:0008270">
    <property type="term" value="F:zinc ion binding"/>
    <property type="evidence" value="ECO:0007669"/>
    <property type="project" value="UniProtKB-UniRule"/>
</dbReference>
<dbReference type="GO" id="GO:0051604">
    <property type="term" value="P:protein maturation"/>
    <property type="evidence" value="ECO:0007669"/>
    <property type="project" value="InterPro"/>
</dbReference>
<dbReference type="GO" id="GO:0036211">
    <property type="term" value="P:protein modification process"/>
    <property type="evidence" value="ECO:0007669"/>
    <property type="project" value="UniProtKB-UniRule"/>
</dbReference>
<dbReference type="Gene3D" id="3.30.2320.80">
    <property type="match status" value="1"/>
</dbReference>
<dbReference type="HAMAP" id="MF_00213">
    <property type="entry name" value="HypA_HybF"/>
    <property type="match status" value="1"/>
</dbReference>
<dbReference type="InterPro" id="IPR000688">
    <property type="entry name" value="HypA/HybF"/>
</dbReference>
<dbReference type="NCBIfam" id="TIGR00100">
    <property type="entry name" value="hypA"/>
    <property type="match status" value="1"/>
</dbReference>
<dbReference type="PANTHER" id="PTHR34535">
    <property type="entry name" value="HYDROGENASE MATURATION FACTOR HYPA"/>
    <property type="match status" value="1"/>
</dbReference>
<dbReference type="PANTHER" id="PTHR34535:SF3">
    <property type="entry name" value="HYDROGENASE MATURATION FACTOR HYPA"/>
    <property type="match status" value="1"/>
</dbReference>
<dbReference type="Pfam" id="PF01155">
    <property type="entry name" value="HypA"/>
    <property type="match status" value="1"/>
</dbReference>
<dbReference type="PIRSF" id="PIRSF004761">
    <property type="entry name" value="Hydrgn_mat_HypA"/>
    <property type="match status" value="1"/>
</dbReference>
<protein>
    <recommendedName>
        <fullName evidence="1">Hydrogenase maturation factor HypA</fullName>
    </recommendedName>
</protein>
<name>HYPA_XANP2</name>
<gene>
    <name evidence="1" type="primary">hypA</name>
    <name type="ordered locus">Xaut_2182</name>
</gene>
<feature type="chain" id="PRO_1000099900" description="Hydrogenase maturation factor HypA">
    <location>
        <begin position="1"/>
        <end position="113"/>
    </location>
</feature>
<feature type="binding site" evidence="1">
    <location>
        <position position="2"/>
    </location>
    <ligand>
        <name>Ni(2+)</name>
        <dbReference type="ChEBI" id="CHEBI:49786"/>
    </ligand>
</feature>
<feature type="binding site" evidence="1">
    <location>
        <position position="73"/>
    </location>
    <ligand>
        <name>Zn(2+)</name>
        <dbReference type="ChEBI" id="CHEBI:29105"/>
    </ligand>
</feature>
<feature type="binding site" evidence="1">
    <location>
        <position position="76"/>
    </location>
    <ligand>
        <name>Zn(2+)</name>
        <dbReference type="ChEBI" id="CHEBI:29105"/>
    </ligand>
</feature>
<feature type="binding site" evidence="1">
    <location>
        <position position="89"/>
    </location>
    <ligand>
        <name>Zn(2+)</name>
        <dbReference type="ChEBI" id="CHEBI:29105"/>
    </ligand>
</feature>
<feature type="binding site" evidence="1">
    <location>
        <position position="92"/>
    </location>
    <ligand>
        <name>Zn(2+)</name>
        <dbReference type="ChEBI" id="CHEBI:29105"/>
    </ligand>
</feature>
<reference key="1">
    <citation type="submission" date="2007-07" db="EMBL/GenBank/DDBJ databases">
        <title>Complete sequence of chromosome of Xanthobacter autotrophicus Py2.</title>
        <authorList>
            <consortium name="US DOE Joint Genome Institute"/>
            <person name="Copeland A."/>
            <person name="Lucas S."/>
            <person name="Lapidus A."/>
            <person name="Barry K."/>
            <person name="Glavina del Rio T."/>
            <person name="Hammon N."/>
            <person name="Israni S."/>
            <person name="Dalin E."/>
            <person name="Tice H."/>
            <person name="Pitluck S."/>
            <person name="Sims D."/>
            <person name="Brettin T."/>
            <person name="Bruce D."/>
            <person name="Detter J.C."/>
            <person name="Han C."/>
            <person name="Tapia R."/>
            <person name="Brainard J."/>
            <person name="Schmutz J."/>
            <person name="Larimer F."/>
            <person name="Land M."/>
            <person name="Hauser L."/>
            <person name="Kyrpides N."/>
            <person name="Kim E."/>
            <person name="Ensigns S.A."/>
            <person name="Richardson P."/>
        </authorList>
    </citation>
    <scope>NUCLEOTIDE SEQUENCE [LARGE SCALE GENOMIC DNA]</scope>
    <source>
        <strain>ATCC BAA-1158 / Py2</strain>
    </source>
</reference>
<sequence>MHEMAVCESLLSAMEEAAKAQNFSRVTRVRLAIGRFAGIEVEALRFGFDVVMRGSLAEGAELVVLEEDGSAWCFDCCETVALSHRLASCPKCGGERLVPNGGTDMKIKDLEVL</sequence>
<evidence type="ECO:0000255" key="1">
    <source>
        <dbReference type="HAMAP-Rule" id="MF_00213"/>
    </source>
</evidence>
<keyword id="KW-0479">Metal-binding</keyword>
<keyword id="KW-0533">Nickel</keyword>
<keyword id="KW-1185">Reference proteome</keyword>
<keyword id="KW-0862">Zinc</keyword>
<comment type="function">
    <text evidence="1">Involved in the maturation of [NiFe] hydrogenases. Required for nickel insertion into the metal center of the hydrogenase.</text>
</comment>
<comment type="similarity">
    <text evidence="1">Belongs to the HypA/HybF family.</text>
</comment>
<organism>
    <name type="scientific">Xanthobacter autotrophicus (strain ATCC BAA-1158 / Py2)</name>
    <dbReference type="NCBI Taxonomy" id="78245"/>
    <lineage>
        <taxon>Bacteria</taxon>
        <taxon>Pseudomonadati</taxon>
        <taxon>Pseudomonadota</taxon>
        <taxon>Alphaproteobacteria</taxon>
        <taxon>Hyphomicrobiales</taxon>
        <taxon>Xanthobacteraceae</taxon>
        <taxon>Xanthobacter</taxon>
    </lineage>
</organism>
<accession>A7IHD3</accession>